<dbReference type="EC" id="7.1.1.-" evidence="1"/>
<dbReference type="EMBL" id="CP001364">
    <property type="protein sequence ID" value="ACM54523.1"/>
    <property type="molecule type" value="Genomic_DNA"/>
</dbReference>
<dbReference type="SMR" id="B9LAV0"/>
<dbReference type="KEGG" id="chl:Chy400_3144"/>
<dbReference type="HOGENOM" id="CLU_144724_0_0_0"/>
<dbReference type="OrthoDB" id="9810120at2"/>
<dbReference type="GO" id="GO:0030964">
    <property type="term" value="C:NADH dehydrogenase complex"/>
    <property type="evidence" value="ECO:0007669"/>
    <property type="project" value="TreeGrafter"/>
</dbReference>
<dbReference type="GO" id="GO:0005886">
    <property type="term" value="C:plasma membrane"/>
    <property type="evidence" value="ECO:0007669"/>
    <property type="project" value="UniProtKB-SubCell"/>
</dbReference>
<dbReference type="GO" id="GO:0050136">
    <property type="term" value="F:NADH:ubiquinone reductase (non-electrogenic) activity"/>
    <property type="evidence" value="ECO:0007669"/>
    <property type="project" value="UniProtKB-UniRule"/>
</dbReference>
<dbReference type="GO" id="GO:0048038">
    <property type="term" value="F:quinone binding"/>
    <property type="evidence" value="ECO:0007669"/>
    <property type="project" value="UniProtKB-KW"/>
</dbReference>
<dbReference type="GO" id="GO:0042773">
    <property type="term" value="P:ATP synthesis coupled electron transport"/>
    <property type="evidence" value="ECO:0007669"/>
    <property type="project" value="InterPro"/>
</dbReference>
<dbReference type="FunFam" id="1.10.287.3510:FF:000001">
    <property type="entry name" value="NADH-quinone oxidoreductase subunit K"/>
    <property type="match status" value="1"/>
</dbReference>
<dbReference type="Gene3D" id="1.10.287.3510">
    <property type="match status" value="1"/>
</dbReference>
<dbReference type="HAMAP" id="MF_01456">
    <property type="entry name" value="NDH1_NuoK"/>
    <property type="match status" value="1"/>
</dbReference>
<dbReference type="InterPro" id="IPR001133">
    <property type="entry name" value="NADH_UbQ_OxRdtase_chain4L/K"/>
</dbReference>
<dbReference type="InterPro" id="IPR039428">
    <property type="entry name" value="NUOK/Mnh_C1-like"/>
</dbReference>
<dbReference type="NCBIfam" id="NF004320">
    <property type="entry name" value="PRK05715.1-2"/>
    <property type="match status" value="1"/>
</dbReference>
<dbReference type="NCBIfam" id="NF004321">
    <property type="entry name" value="PRK05715.1-3"/>
    <property type="match status" value="1"/>
</dbReference>
<dbReference type="PANTHER" id="PTHR11434:SF21">
    <property type="entry name" value="NADH DEHYDROGENASE SUBUNIT 4L-RELATED"/>
    <property type="match status" value="1"/>
</dbReference>
<dbReference type="PANTHER" id="PTHR11434">
    <property type="entry name" value="NADH-UBIQUINONE OXIDOREDUCTASE SUBUNIT ND4L"/>
    <property type="match status" value="1"/>
</dbReference>
<dbReference type="Pfam" id="PF00420">
    <property type="entry name" value="Oxidored_q2"/>
    <property type="match status" value="1"/>
</dbReference>
<sequence length="100" mass="10725">MVPTSYYVLLSAILFTIGVLGVLLRRNAIVVFMAVELMLNAANLALVAFARERLGVEAQVIVFFVITVAAAEVAVGLALLVSIFRTKRTADVDEVSTLKG</sequence>
<keyword id="KW-1003">Cell membrane</keyword>
<keyword id="KW-0472">Membrane</keyword>
<keyword id="KW-0520">NAD</keyword>
<keyword id="KW-0874">Quinone</keyword>
<keyword id="KW-1278">Translocase</keyword>
<keyword id="KW-0812">Transmembrane</keyword>
<keyword id="KW-1133">Transmembrane helix</keyword>
<keyword id="KW-0813">Transport</keyword>
<keyword id="KW-0830">Ubiquinone</keyword>
<organism>
    <name type="scientific">Chloroflexus aurantiacus (strain ATCC 29364 / DSM 637 / Y-400-fl)</name>
    <dbReference type="NCBI Taxonomy" id="480224"/>
    <lineage>
        <taxon>Bacteria</taxon>
        <taxon>Bacillati</taxon>
        <taxon>Chloroflexota</taxon>
        <taxon>Chloroflexia</taxon>
        <taxon>Chloroflexales</taxon>
        <taxon>Chloroflexineae</taxon>
        <taxon>Chloroflexaceae</taxon>
        <taxon>Chloroflexus</taxon>
    </lineage>
</organism>
<protein>
    <recommendedName>
        <fullName evidence="1">NADH-quinone oxidoreductase subunit K</fullName>
        <ecNumber evidence="1">7.1.1.-</ecNumber>
    </recommendedName>
    <alternativeName>
        <fullName evidence="1">NADH dehydrogenase I subunit K</fullName>
    </alternativeName>
    <alternativeName>
        <fullName evidence="1">NDH-1 subunit K</fullName>
    </alternativeName>
</protein>
<name>NUOK_CHLSY</name>
<gene>
    <name evidence="1" type="primary">nuoK</name>
    <name type="ordered locus">Chy400_3144</name>
</gene>
<proteinExistence type="inferred from homology"/>
<feature type="chain" id="PRO_0000390012" description="NADH-quinone oxidoreductase subunit K">
    <location>
        <begin position="1"/>
        <end position="100"/>
    </location>
</feature>
<feature type="transmembrane region" description="Helical" evidence="1">
    <location>
        <begin position="4"/>
        <end position="24"/>
    </location>
</feature>
<feature type="transmembrane region" description="Helical" evidence="1">
    <location>
        <begin position="29"/>
        <end position="49"/>
    </location>
</feature>
<feature type="transmembrane region" description="Helical" evidence="1">
    <location>
        <begin position="60"/>
        <end position="80"/>
    </location>
</feature>
<evidence type="ECO:0000255" key="1">
    <source>
        <dbReference type="HAMAP-Rule" id="MF_01456"/>
    </source>
</evidence>
<reference key="1">
    <citation type="submission" date="2009-01" db="EMBL/GenBank/DDBJ databases">
        <title>Complete sequence of Chloroflexus sp. Y-400-fl.</title>
        <authorList>
            <consortium name="US DOE Joint Genome Institute"/>
            <person name="Lucas S."/>
            <person name="Copeland A."/>
            <person name="Lapidus A."/>
            <person name="Glavina del Rio T."/>
            <person name="Dalin E."/>
            <person name="Tice H."/>
            <person name="Bruce D."/>
            <person name="Goodwin L."/>
            <person name="Pitluck S."/>
            <person name="Sims D."/>
            <person name="Kiss H."/>
            <person name="Brettin T."/>
            <person name="Detter J.C."/>
            <person name="Han C."/>
            <person name="Larimer F."/>
            <person name="Land M."/>
            <person name="Hauser L."/>
            <person name="Kyrpides N."/>
            <person name="Ovchinnikova G."/>
            <person name="Bryant D.A."/>
            <person name="Richardson P."/>
        </authorList>
    </citation>
    <scope>NUCLEOTIDE SEQUENCE [LARGE SCALE GENOMIC DNA]</scope>
    <source>
        <strain>ATCC 29364 / DSM 637 / Y-400-fl</strain>
    </source>
</reference>
<comment type="function">
    <text evidence="1">NDH-1 shuttles electrons from NADH, via FMN and iron-sulfur (Fe-S) centers, to quinones in the respiratory chain. The immediate electron acceptor for the enzyme in this species is believed to be ubiquinone. Couples the redox reaction to proton translocation (for every two electrons transferred, four hydrogen ions are translocated across the cytoplasmic membrane), and thus conserves the redox energy in a proton gradient.</text>
</comment>
<comment type="catalytic activity">
    <reaction evidence="1">
        <text>a quinone + NADH + 5 H(+)(in) = a quinol + NAD(+) + 4 H(+)(out)</text>
        <dbReference type="Rhea" id="RHEA:57888"/>
        <dbReference type="ChEBI" id="CHEBI:15378"/>
        <dbReference type="ChEBI" id="CHEBI:24646"/>
        <dbReference type="ChEBI" id="CHEBI:57540"/>
        <dbReference type="ChEBI" id="CHEBI:57945"/>
        <dbReference type="ChEBI" id="CHEBI:132124"/>
    </reaction>
</comment>
<comment type="subunit">
    <text evidence="1">NDH-1 is composed of 14 different subunits. Subunits NuoA, H, J, K, L, M, N constitute the membrane sector of the complex.</text>
</comment>
<comment type="subcellular location">
    <subcellularLocation>
        <location evidence="1">Cell membrane</location>
        <topology evidence="1">Multi-pass membrane protein</topology>
    </subcellularLocation>
</comment>
<comment type="similarity">
    <text evidence="1">Belongs to the complex I subunit 4L family.</text>
</comment>
<accession>B9LAV0</accession>